<accession>P0CM78</accession>
<accession>Q55U98</accession>
<accession>Q5KI47</accession>
<name>GRC3_CRYNJ</name>
<protein>
    <recommendedName>
        <fullName>Polynucleotide 5'-hydroxyl-kinase GRC3</fullName>
        <ecNumber>2.7.1.-</ecNumber>
    </recommendedName>
</protein>
<keyword id="KW-0067">ATP-binding</keyword>
<keyword id="KW-0418">Kinase</keyword>
<keyword id="KW-0547">Nucleotide-binding</keyword>
<keyword id="KW-0539">Nucleus</keyword>
<keyword id="KW-1185">Reference proteome</keyword>
<keyword id="KW-0698">rRNA processing</keyword>
<keyword id="KW-0808">Transferase</keyword>
<gene>
    <name type="primary">GRC3</name>
    <name type="ordered locus">CND04240</name>
</gene>
<dbReference type="EC" id="2.7.1.-"/>
<dbReference type="EMBL" id="AE017344">
    <property type="protein sequence ID" value="AAW43285.2"/>
    <property type="molecule type" value="Genomic_DNA"/>
</dbReference>
<dbReference type="RefSeq" id="XP_570592.1">
    <property type="nucleotide sequence ID" value="XM_570592.1"/>
</dbReference>
<dbReference type="SMR" id="P0CM78"/>
<dbReference type="FunCoup" id="P0CM78">
    <property type="interactions" value="240"/>
</dbReference>
<dbReference type="STRING" id="214684.P0CM78"/>
<dbReference type="PaxDb" id="214684-P0CM78"/>
<dbReference type="eggNOG" id="KOG2750">
    <property type="taxonomic scope" value="Eukaryota"/>
</dbReference>
<dbReference type="HOGENOM" id="CLU_010345_0_0_1"/>
<dbReference type="InParanoid" id="P0CM78"/>
<dbReference type="Proteomes" id="UP000002149">
    <property type="component" value="Chromosome 4"/>
</dbReference>
<dbReference type="GO" id="GO:0005730">
    <property type="term" value="C:nucleolus"/>
    <property type="evidence" value="ECO:0007669"/>
    <property type="project" value="UniProtKB-SubCell"/>
</dbReference>
<dbReference type="GO" id="GO:0005634">
    <property type="term" value="C:nucleus"/>
    <property type="evidence" value="ECO:0000318"/>
    <property type="project" value="GO_Central"/>
</dbReference>
<dbReference type="GO" id="GO:0005524">
    <property type="term" value="F:ATP binding"/>
    <property type="evidence" value="ECO:0007669"/>
    <property type="project" value="UniProtKB-KW"/>
</dbReference>
<dbReference type="GO" id="GO:0051731">
    <property type="term" value="F:polynucleotide 5'-hydroxyl-kinase activity"/>
    <property type="evidence" value="ECO:0000250"/>
    <property type="project" value="UniProtKB"/>
</dbReference>
<dbReference type="GO" id="GO:0000448">
    <property type="term" value="P:cleavage in ITS2 between 5.8S rRNA and LSU-rRNA of tricistronic rRNA transcript (SSU-rRNA, 5.8S rRNA, LSU-rRNA)"/>
    <property type="evidence" value="ECO:0000318"/>
    <property type="project" value="GO_Central"/>
</dbReference>
<dbReference type="GO" id="GO:0006364">
    <property type="term" value="P:rRNA processing"/>
    <property type="evidence" value="ECO:0000250"/>
    <property type="project" value="UniProtKB"/>
</dbReference>
<dbReference type="FunFam" id="3.40.50.300:FF:002899">
    <property type="entry name" value="Unplaced genomic scaffold supercont1.83, whole genome shotgun sequence"/>
    <property type="match status" value="1"/>
</dbReference>
<dbReference type="Gene3D" id="3.40.50.300">
    <property type="entry name" value="P-loop containing nucleotide triphosphate hydrolases"/>
    <property type="match status" value="1"/>
</dbReference>
<dbReference type="InterPro" id="IPR045116">
    <property type="entry name" value="Clp1/Grc3"/>
</dbReference>
<dbReference type="InterPro" id="IPR032319">
    <property type="entry name" value="CLP1_P"/>
</dbReference>
<dbReference type="InterPro" id="IPR027417">
    <property type="entry name" value="P-loop_NTPase"/>
</dbReference>
<dbReference type="PANTHER" id="PTHR12755">
    <property type="entry name" value="CLEAVAGE/POLYADENYLATION FACTOR IA SUBUNIT CLP1P"/>
    <property type="match status" value="1"/>
</dbReference>
<dbReference type="PANTHER" id="PTHR12755:SF3">
    <property type="entry name" value="POLYNUCLEOTIDE 5'-HYDROXYL-KINASE NOL9"/>
    <property type="match status" value="1"/>
</dbReference>
<dbReference type="Pfam" id="PF16575">
    <property type="entry name" value="CLP1_P"/>
    <property type="match status" value="1"/>
</dbReference>
<feature type="chain" id="PRO_0000087591" description="Polynucleotide 5'-hydroxyl-kinase GRC3">
    <location>
        <begin position="1"/>
        <end position="761"/>
    </location>
</feature>
<feature type="region of interest" description="Disordered" evidence="3">
    <location>
        <begin position="1"/>
        <end position="131"/>
    </location>
</feature>
<feature type="compositionally biased region" description="Low complexity" evidence="3">
    <location>
        <begin position="1"/>
        <end position="14"/>
    </location>
</feature>
<feature type="compositionally biased region" description="Basic residues" evidence="3">
    <location>
        <begin position="39"/>
        <end position="55"/>
    </location>
</feature>
<feature type="compositionally biased region" description="Polar residues" evidence="3">
    <location>
        <begin position="61"/>
        <end position="82"/>
    </location>
</feature>
<feature type="compositionally biased region" description="Low complexity" evidence="3">
    <location>
        <begin position="83"/>
        <end position="99"/>
    </location>
</feature>
<feature type="compositionally biased region" description="Acidic residues" evidence="3">
    <location>
        <begin position="100"/>
        <end position="111"/>
    </location>
</feature>
<feature type="compositionally biased region" description="Basic and acidic residues" evidence="3">
    <location>
        <begin position="112"/>
        <end position="125"/>
    </location>
</feature>
<feature type="binding site" evidence="2">
    <location>
        <begin position="348"/>
        <end position="355"/>
    </location>
    <ligand>
        <name>ATP</name>
        <dbReference type="ChEBI" id="CHEBI:30616"/>
    </ligand>
</feature>
<evidence type="ECO:0000250" key="1"/>
<evidence type="ECO:0000255" key="2"/>
<evidence type="ECO:0000256" key="3">
    <source>
        <dbReference type="SAM" id="MobiDB-lite"/>
    </source>
</evidence>
<evidence type="ECO:0000305" key="4"/>
<proteinExistence type="inferred from homology"/>
<reference key="1">
    <citation type="journal article" date="2005" name="Science">
        <title>The genome of the basidiomycetous yeast and human pathogen Cryptococcus neoformans.</title>
        <authorList>
            <person name="Loftus B.J."/>
            <person name="Fung E."/>
            <person name="Roncaglia P."/>
            <person name="Rowley D."/>
            <person name="Amedeo P."/>
            <person name="Bruno D."/>
            <person name="Vamathevan J."/>
            <person name="Miranda M."/>
            <person name="Anderson I.J."/>
            <person name="Fraser J.A."/>
            <person name="Allen J.E."/>
            <person name="Bosdet I.E."/>
            <person name="Brent M.R."/>
            <person name="Chiu R."/>
            <person name="Doering T.L."/>
            <person name="Donlin M.J."/>
            <person name="D'Souza C.A."/>
            <person name="Fox D.S."/>
            <person name="Grinberg V."/>
            <person name="Fu J."/>
            <person name="Fukushima M."/>
            <person name="Haas B.J."/>
            <person name="Huang J.C."/>
            <person name="Janbon G."/>
            <person name="Jones S.J.M."/>
            <person name="Koo H.L."/>
            <person name="Krzywinski M.I."/>
            <person name="Kwon-Chung K.J."/>
            <person name="Lengeler K.B."/>
            <person name="Maiti R."/>
            <person name="Marra M.A."/>
            <person name="Marra R.E."/>
            <person name="Mathewson C.A."/>
            <person name="Mitchell T.G."/>
            <person name="Pertea M."/>
            <person name="Riggs F.R."/>
            <person name="Salzberg S.L."/>
            <person name="Schein J.E."/>
            <person name="Shvartsbeyn A."/>
            <person name="Shin H."/>
            <person name="Shumway M."/>
            <person name="Specht C.A."/>
            <person name="Suh B.B."/>
            <person name="Tenney A."/>
            <person name="Utterback T.R."/>
            <person name="Wickes B.L."/>
            <person name="Wortman J.R."/>
            <person name="Wye N.H."/>
            <person name="Kronstad J.W."/>
            <person name="Lodge J.K."/>
            <person name="Heitman J."/>
            <person name="Davis R.W."/>
            <person name="Fraser C.M."/>
            <person name="Hyman R.W."/>
        </authorList>
    </citation>
    <scope>NUCLEOTIDE SEQUENCE [LARGE SCALE GENOMIC DNA]</scope>
    <source>
        <strain>JEC21 / ATCC MYA-565</strain>
    </source>
</reference>
<comment type="function">
    <text evidence="1">Polynucleotide 5'-kinase involved in rRNA processing.</text>
</comment>
<comment type="subcellular location">
    <subcellularLocation>
        <location evidence="1">Nucleus</location>
        <location evidence="1">Nucleolus</location>
    </subcellularLocation>
</comment>
<comment type="similarity">
    <text evidence="4">Belongs to the Clp1 family. NOL9/GRC3 subfamily.</text>
</comment>
<organism>
    <name type="scientific">Cryptococcus neoformans var. neoformans serotype D (strain JEC21 / ATCC MYA-565)</name>
    <name type="common">Filobasidiella neoformans</name>
    <dbReference type="NCBI Taxonomy" id="214684"/>
    <lineage>
        <taxon>Eukaryota</taxon>
        <taxon>Fungi</taxon>
        <taxon>Dikarya</taxon>
        <taxon>Basidiomycota</taxon>
        <taxon>Agaricomycotina</taxon>
        <taxon>Tremellomycetes</taxon>
        <taxon>Tremellales</taxon>
        <taxon>Cryptococcaceae</taxon>
        <taxon>Cryptococcus</taxon>
        <taxon>Cryptococcus neoformans species complex</taxon>
    </lineage>
</organism>
<sequence>MSALAARRATAAAASPKPEQPESSIEEVSVSGALTLPSPKRRKTRQTSPKPRSKARYSDDVPTSRQFFQATESLAEQRTGRFSPSAPDSDGGTSSSSVGDSDEDMAQEDEFEDRREVDGERDQRKVSVAANMSSSGPFKSLDLMPVDITSQFNPKDNVNFCRITEGQLASAEMNDGHPGPGVIVSLARNESLTIAGLFLLTPLQNTLSIYSTALSPSMSSFPVYAPTSHPLPVISPASTQAPGKGTLSILNNIKLPLSFQKESDKTLLLIRENRCGIDGLRNGAVPGFSNIWLEDNGPWGLRGVHPVVGSFPVPVYPYCTPPSWSHAISSLSSSDVNLQTPFVGLVKGPKRSGKSTFARALLNNLLRRFRKVAWLECDLGQGEFGSGAVVGLWILDKPALGPPFTHPLLPSRSHYLGTYTPLTCPDEYLVAIRHLIEHYKYELQYTSEYSALHTTVHDKISTHVPLVINTQGWMKGLGEELLNVIESMAQPTRVFSFESQSEEVYSGQGWTSTPPWQATQLPYDPAYPTTEPVETEVTQTYSLETAPVSALQARYTPADLRVLSAITYFHASLHPTQSVPVTWDISSPLVCTIPWEVELGIGKALEKVYLIGEGSEGVLEEDLPIALNGAIVALAEMLGSYEDEPTVYEQGRSPPPTDLVNILGLAVIRSLSSGNSVNPGLKLQLLTPLPPSYLSRARILIKSGALELPLPGMIDWRRGGINEEGMLGKGWEEIPFLDVGGLDVIGGERRRFRKNIMRKGM</sequence>